<reference key="1">
    <citation type="journal article" date="2001" name="J. Bacteriol.">
        <title>Cloning, expression, and characterization of cis-polyprenyl diphosphate synthase from the thermoacidophilic archaeon Sulfolobus acidocaldarius.</title>
        <authorList>
            <person name="Hemmi H."/>
            <person name="Yamashita S."/>
            <person name="Shimoyama T."/>
            <person name="Nakayama T."/>
            <person name="Nishino T."/>
        </authorList>
    </citation>
    <scope>NUCLEOTIDE SEQUENCE [GENOMIC DNA]</scope>
    <scope>CATALYTIC ACTIVITY</scope>
    <scope>CHARACTERIZATION</scope>
</reference>
<reference key="2">
    <citation type="journal article" date="2005" name="J. Bacteriol.">
        <title>The genome of Sulfolobus acidocaldarius, a model organism of the Crenarchaeota.</title>
        <authorList>
            <person name="Chen L."/>
            <person name="Bruegger K."/>
            <person name="Skovgaard M."/>
            <person name="Redder P."/>
            <person name="She Q."/>
            <person name="Torarinsson E."/>
            <person name="Greve B."/>
            <person name="Awayez M."/>
            <person name="Zibat A."/>
            <person name="Klenk H.-P."/>
            <person name="Garrett R.A."/>
        </authorList>
    </citation>
    <scope>NUCLEOTIDE SEQUENCE [LARGE SCALE GENOMIC DNA]</scope>
    <source>
        <strain>ATCC 33909 / DSM 639 / JCM 8929 / NBRC 15157 / NCIMB 11770</strain>
    </source>
</reference>
<keyword id="KW-0460">Magnesium</keyword>
<keyword id="KW-0479">Metal-binding</keyword>
<keyword id="KW-1185">Reference proteome</keyword>
<keyword id="KW-0808">Transferase</keyword>
<evidence type="ECO:0000250" key="1"/>
<evidence type="ECO:0000269" key="2">
    <source>
    </source>
</evidence>
<evidence type="ECO:0000305" key="3"/>
<feature type="chain" id="PRO_0000123741" description="Tritrans,polycis-undecaprenyl-diphosphate synthase (GGDP specific)">
    <location>
        <begin position="1"/>
        <end position="262"/>
    </location>
</feature>
<feature type="active site" evidence="1">
    <location>
        <position position="40"/>
    </location>
</feature>
<feature type="active site" description="Proton acceptor" evidence="1">
    <location>
        <position position="88"/>
    </location>
</feature>
<feature type="binding site" evidence="1">
    <location>
        <position position="40"/>
    </location>
    <ligand>
        <name>Mg(2+)</name>
        <dbReference type="ChEBI" id="CHEBI:18420"/>
    </ligand>
</feature>
<feature type="binding site" evidence="1">
    <location>
        <begin position="41"/>
        <end position="44"/>
    </location>
    <ligand>
        <name>substrate</name>
    </ligand>
</feature>
<feature type="binding site" evidence="1">
    <location>
        <position position="45"/>
    </location>
    <ligand>
        <name>substrate</name>
    </ligand>
</feature>
<feature type="binding site" evidence="1">
    <location>
        <begin position="85"/>
        <end position="87"/>
    </location>
    <ligand>
        <name>substrate</name>
    </ligand>
</feature>
<feature type="binding site" evidence="1">
    <location>
        <position position="92"/>
    </location>
    <ligand>
        <name>substrate</name>
    </ligand>
</feature>
<feature type="binding site" evidence="1">
    <location>
        <position position="211"/>
    </location>
    <ligand>
        <name>substrate</name>
    </ligand>
</feature>
<feature type="binding site" evidence="1">
    <location>
        <begin position="217"/>
        <end position="219"/>
    </location>
    <ligand>
        <name>substrate</name>
    </ligand>
</feature>
<feature type="binding site" evidence="1">
    <location>
        <position position="230"/>
    </location>
    <ligand>
        <name>Mg(2+)</name>
        <dbReference type="ChEBI" id="CHEBI:18420"/>
    </ligand>
</feature>
<protein>
    <recommendedName>
        <fullName>Tritrans,polycis-undecaprenyl-diphosphate synthase (GGDP specific)</fullName>
        <ecNumber>2.5.1.89</ecNumber>
    </recommendedName>
    <alternativeName>
        <fullName>Undecaprenyl diphosphate synthase</fullName>
        <shortName>UDS</shortName>
    </alternativeName>
    <alternativeName>
        <fullName>Undecaprenyl pyrophosphate synthase</fullName>
        <shortName>UPP synthase</shortName>
    </alternativeName>
</protein>
<gene>
    <name type="primary">uppS</name>
    <name type="synonym">cpdS</name>
    <name type="ordered locus">Saci_0757</name>
</gene>
<comment type="function">
    <text>Generates tritrans,heptacis-undecaprenyl diphosphate from isopentenyl pyrophosphate (IPP) and geranylgeranyl diphosphate. It is probably the precursor of glycosyl carrier lipids.</text>
</comment>
<comment type="catalytic activity">
    <reaction evidence="2">
        <text>geranylgeranyl diphosphate + 7 isopentenyl diphosphate = tri-trans,hepta-cis-undecaprenyl diphosphate + 7 diphosphate</text>
        <dbReference type="Rhea" id="RHEA:27622"/>
        <dbReference type="ChEBI" id="CHEBI:33019"/>
        <dbReference type="ChEBI" id="CHEBI:57533"/>
        <dbReference type="ChEBI" id="CHEBI:60388"/>
        <dbReference type="ChEBI" id="CHEBI:128769"/>
        <dbReference type="EC" id="2.5.1.89"/>
    </reaction>
</comment>
<comment type="cofactor">
    <cofactor evidence="1">
        <name>Mg(2+)</name>
        <dbReference type="ChEBI" id="CHEBI:18420"/>
    </cofactor>
    <text evidence="1">Binds 2 magnesium ions per subunit.</text>
</comment>
<comment type="subunit">
    <text evidence="1">Homodimer.</text>
</comment>
<comment type="similarity">
    <text evidence="3">Belongs to the UPP synthase family.</text>
</comment>
<name>UPPS_SULAC</name>
<accession>Q9HH76</accession>
<accession>Q4JAP6</accession>
<proteinExistence type="evidence at protein level"/>
<sequence>MAKDVITRALLRPIYKIYEKILWSQIKDGPFPFHVGIIPDGNRRWARNNRLPLDQGYYTGYVKLRDVLTWILEIGISTVTVFALSAENCEKRTQQELSMIFKYLKIGLDELLTSDLVHKYQVRVKAIGMLDKLPEDLKKLVVDLESTTEKYNKKKLILAICYGGRQEILDAIRKIMNDYKLGIIDSKSIDESTFRKYLYDQELSDIDLLIRSSGEIRISNFLLWHLAYSELFFVDVYWPDFRKIDLWRAIRSFQKRKRNFGA</sequence>
<organism>
    <name type="scientific">Sulfolobus acidocaldarius (strain ATCC 33909 / DSM 639 / JCM 8929 / NBRC 15157 / NCIMB 11770)</name>
    <dbReference type="NCBI Taxonomy" id="330779"/>
    <lineage>
        <taxon>Archaea</taxon>
        <taxon>Thermoproteota</taxon>
        <taxon>Thermoprotei</taxon>
        <taxon>Sulfolobales</taxon>
        <taxon>Sulfolobaceae</taxon>
        <taxon>Sulfolobus</taxon>
    </lineage>
</organism>
<dbReference type="EC" id="2.5.1.89"/>
<dbReference type="EMBL" id="AB048249">
    <property type="protein sequence ID" value="BAB12723.1"/>
    <property type="molecule type" value="Genomic_DNA"/>
</dbReference>
<dbReference type="EMBL" id="CP000077">
    <property type="protein sequence ID" value="AAY80133.1"/>
    <property type="molecule type" value="Genomic_DNA"/>
</dbReference>
<dbReference type="RefSeq" id="WP_011277635.1">
    <property type="nucleotide sequence ID" value="NC_007181.1"/>
</dbReference>
<dbReference type="SMR" id="Q9HH76"/>
<dbReference type="STRING" id="330779.Saci_0757"/>
<dbReference type="GeneID" id="14551275"/>
<dbReference type="GeneID" id="78441104"/>
<dbReference type="KEGG" id="sai:Saci_0757"/>
<dbReference type="PATRIC" id="fig|330779.12.peg.726"/>
<dbReference type="eggNOG" id="arCOG01532">
    <property type="taxonomic scope" value="Archaea"/>
</dbReference>
<dbReference type="HOGENOM" id="CLU_038505_0_4_2"/>
<dbReference type="BioCyc" id="MetaCyc:MONOMER-15683"/>
<dbReference type="BRENDA" id="2.5.1.89">
    <property type="organism ID" value="6160"/>
</dbReference>
<dbReference type="Proteomes" id="UP000001018">
    <property type="component" value="Chromosome"/>
</dbReference>
<dbReference type="GO" id="GO:0045547">
    <property type="term" value="F:ditrans,polycis-polyprenyl diphosphate synthase [(2E,6E)-farnesyl diphosphate specific] activity"/>
    <property type="evidence" value="ECO:0007669"/>
    <property type="project" value="TreeGrafter"/>
</dbReference>
<dbReference type="GO" id="GO:0000287">
    <property type="term" value="F:magnesium ion binding"/>
    <property type="evidence" value="ECO:0007669"/>
    <property type="project" value="UniProtKB-UniRule"/>
</dbReference>
<dbReference type="GO" id="GO:0016094">
    <property type="term" value="P:polyprenol biosynthetic process"/>
    <property type="evidence" value="ECO:0007669"/>
    <property type="project" value="TreeGrafter"/>
</dbReference>
<dbReference type="CDD" id="cd00475">
    <property type="entry name" value="Cis_IPPS"/>
    <property type="match status" value="1"/>
</dbReference>
<dbReference type="Gene3D" id="3.40.1180.10">
    <property type="entry name" value="Decaprenyl diphosphate synthase-like"/>
    <property type="match status" value="1"/>
</dbReference>
<dbReference type="HAMAP" id="MF_01139">
    <property type="entry name" value="ISPT"/>
    <property type="match status" value="1"/>
</dbReference>
<dbReference type="InterPro" id="IPR001441">
    <property type="entry name" value="UPP_synth-like"/>
</dbReference>
<dbReference type="InterPro" id="IPR018520">
    <property type="entry name" value="UPP_synth-like_CS"/>
</dbReference>
<dbReference type="InterPro" id="IPR036424">
    <property type="entry name" value="UPP_synth-like_sf"/>
</dbReference>
<dbReference type="NCBIfam" id="TIGR00055">
    <property type="entry name" value="uppS"/>
    <property type="match status" value="1"/>
</dbReference>
<dbReference type="PANTHER" id="PTHR10291:SF43">
    <property type="entry name" value="DEHYDRODOLICHYL DIPHOSPHATE SYNTHASE COMPLEX SUBUNIT DHDDS"/>
    <property type="match status" value="1"/>
</dbReference>
<dbReference type="PANTHER" id="PTHR10291">
    <property type="entry name" value="DEHYDRODOLICHYL DIPHOSPHATE SYNTHASE FAMILY MEMBER"/>
    <property type="match status" value="1"/>
</dbReference>
<dbReference type="Pfam" id="PF01255">
    <property type="entry name" value="Prenyltransf"/>
    <property type="match status" value="1"/>
</dbReference>
<dbReference type="SUPFAM" id="SSF64005">
    <property type="entry name" value="Undecaprenyl diphosphate synthase"/>
    <property type="match status" value="1"/>
</dbReference>
<dbReference type="PROSITE" id="PS01066">
    <property type="entry name" value="UPP_SYNTHASE"/>
    <property type="match status" value="1"/>
</dbReference>